<sequence length="133" mass="15600">MTLPSGHPKSRLVKKFTALGPYIREGKCEDNRFFFDCLAVCVNVKPAPEVREFWGWWMELEAQESRFTYSYQFGLFDKAGDWTSVQIKDAEVVERLEHTLREFHEKLRELLATLNLKLEPADDFRDEPVKLTA</sequence>
<feature type="initiator methionine" description="Removed" evidence="1">
    <location>
        <position position="1"/>
    </location>
</feature>
<feature type="chain" id="PRO_0000268896" description="Sigma factor-binding protein Crl">
    <location>
        <begin position="2"/>
        <end position="133"/>
    </location>
</feature>
<feature type="region of interest" description="Essential for activity" evidence="2">
    <location>
        <begin position="99"/>
        <end position="122"/>
    </location>
</feature>
<feature type="coiled-coil region" evidence="2">
    <location>
        <begin position="90"/>
        <end position="116"/>
    </location>
</feature>
<comment type="function">
    <text evidence="2">Binds to the sigma-S subunit of RNA polymerase, activating expression of sigma-S-regulated genes. Stimulates RNA polymerase holoenzyme formation and may bind to several other sigma factors, such as sigma-70 and sigma-32.</text>
</comment>
<comment type="subcellular location">
    <subcellularLocation>
        <location evidence="2">Cytoplasm</location>
    </subcellularLocation>
</comment>
<comment type="similarity">
    <text evidence="2">Belongs to the Crl family.</text>
</comment>
<keyword id="KW-0010">Activator</keyword>
<keyword id="KW-0175">Coiled coil</keyword>
<keyword id="KW-0963">Cytoplasm</keyword>
<keyword id="KW-0804">Transcription</keyword>
<keyword id="KW-0805">Transcription regulation</keyword>
<evidence type="ECO:0000250" key="1"/>
<evidence type="ECO:0000255" key="2">
    <source>
        <dbReference type="HAMAP-Rule" id="MF_01178"/>
    </source>
</evidence>
<reference key="1">
    <citation type="journal article" date="2006" name="Proc. Natl. Acad. Sci. U.S.A.">
        <title>Identification of genes subject to positive selection in uropathogenic strains of Escherichia coli: a comparative genomics approach.</title>
        <authorList>
            <person name="Chen S.L."/>
            <person name="Hung C.-S."/>
            <person name="Xu J."/>
            <person name="Reigstad C.S."/>
            <person name="Magrini V."/>
            <person name="Sabo A."/>
            <person name="Blasiar D."/>
            <person name="Bieri T."/>
            <person name="Meyer R.R."/>
            <person name="Ozersky P."/>
            <person name="Armstrong J.R."/>
            <person name="Fulton R.S."/>
            <person name="Latreille J.P."/>
            <person name="Spieth J."/>
            <person name="Hooton T.M."/>
            <person name="Mardis E.R."/>
            <person name="Hultgren S.J."/>
            <person name="Gordon J.I."/>
        </authorList>
    </citation>
    <scope>NUCLEOTIDE SEQUENCE [LARGE SCALE GENOMIC DNA]</scope>
    <source>
        <strain>UTI89 / UPEC</strain>
    </source>
</reference>
<name>CRL_ECOUT</name>
<organism>
    <name type="scientific">Escherichia coli (strain UTI89 / UPEC)</name>
    <dbReference type="NCBI Taxonomy" id="364106"/>
    <lineage>
        <taxon>Bacteria</taxon>
        <taxon>Pseudomonadati</taxon>
        <taxon>Pseudomonadota</taxon>
        <taxon>Gammaproteobacteria</taxon>
        <taxon>Enterobacterales</taxon>
        <taxon>Enterobacteriaceae</taxon>
        <taxon>Escherichia</taxon>
    </lineage>
</organism>
<dbReference type="EMBL" id="CP000243">
    <property type="protein sequence ID" value="ABE05784.1"/>
    <property type="molecule type" value="Genomic_DNA"/>
</dbReference>
<dbReference type="RefSeq" id="WP_000174703.1">
    <property type="nucleotide sequence ID" value="NZ_CP064825.1"/>
</dbReference>
<dbReference type="SMR" id="Q1RFT0"/>
<dbReference type="KEGG" id="eci:UTI89_C0281"/>
<dbReference type="HOGENOM" id="CLU_136773_0_0_6"/>
<dbReference type="Proteomes" id="UP000001952">
    <property type="component" value="Chromosome"/>
</dbReference>
<dbReference type="GO" id="GO:0005737">
    <property type="term" value="C:cytoplasm"/>
    <property type="evidence" value="ECO:0007669"/>
    <property type="project" value="UniProtKB-SubCell"/>
</dbReference>
<dbReference type="GO" id="GO:0045893">
    <property type="term" value="P:positive regulation of DNA-templated transcription"/>
    <property type="evidence" value="ECO:0007669"/>
    <property type="project" value="UniProtKB-UniRule"/>
</dbReference>
<dbReference type="FunFam" id="3.30.310.230:FF:000001">
    <property type="entry name" value="Sigma factor-binding protein Crl"/>
    <property type="match status" value="1"/>
</dbReference>
<dbReference type="Gene3D" id="3.30.310.230">
    <property type="entry name" value="Sigma factor-binding protein Crl monomer"/>
    <property type="match status" value="1"/>
</dbReference>
<dbReference type="HAMAP" id="MF_01178">
    <property type="entry name" value="Crl"/>
    <property type="match status" value="1"/>
</dbReference>
<dbReference type="InterPro" id="IPR009986">
    <property type="entry name" value="Tscrpt_reg_Crl"/>
</dbReference>
<dbReference type="InterPro" id="IPR038208">
    <property type="entry name" value="Tscrpt_reg_Crl_sf"/>
</dbReference>
<dbReference type="NCBIfam" id="NF008217">
    <property type="entry name" value="PRK10984.1"/>
    <property type="match status" value="1"/>
</dbReference>
<dbReference type="Pfam" id="PF07417">
    <property type="entry name" value="Crl"/>
    <property type="match status" value="1"/>
</dbReference>
<gene>
    <name evidence="2" type="primary">crl</name>
    <name type="ordered locus">UTI89_C0281</name>
</gene>
<proteinExistence type="inferred from homology"/>
<accession>Q1RFT0</accession>
<protein>
    <recommendedName>
        <fullName evidence="2">Sigma factor-binding protein Crl</fullName>
    </recommendedName>
</protein>